<sequence>MSEGNDQDAGKGRLSLRPAGRMELGRTVDAGSVRQSFSHGRSKVVQVEVRKKRGLQPGTPSAPEGGSSSAPAPQSGNAPQGTPRSGGGNRGSGRGGAGGAGRALTAQELAIRQRVLEQQRVEAARREVERREQEKISILSAAEEARRREEEAKRAAEEEARRKEQEEADRIAAEAARKAAESAPPAEAPPVPPPAQRERTAAPSSRSAPSRTAPSDDIRRPSRPAPIPSKVPVAAPSAPQTLRLRERGDEGEEERKPRRAGGGGAPAPRKAAAPVAKKAVAEPRRGGRIDVRAAIEGEDERTRSIASMRRQRDRERRQAELERLRADQLKVVRDVVLPETIAVGELANRMAVRAADVIKQLMRMGMMATVTQTIDADTAELVVQEFGHRVRRVSESDVEVGLEGISDIDSDLQPRPPVVTVMGHVDHGKTSLLDALRATDVAAGEAGGITQHIGAYQVTLPSRQKLTFLDTPGHEAFTAMRSRGASVTDIVVLVVAADDGVMPQTIEAIKHAKAANAPIIVAINKCDKPGANPGRVRQELLHHEIVVEDMGGDTQDVEVSALKRQNLDKLEEAILLQAEVLDLKANPDRAAEGTVVESRLDRGRGPVATVLVQKGTLRQGDIVVAGAEWGRVRAMLDDKGQQMKEALPSTPVEILGLAGVPSAGEPFVAVENESRAREISEFRQRKIREKMAAGIAAGRGTLEQMLSRIQAGAQKEVAVVIKADVQGSAEAIATTVQKQEHEEVKVRTLLSSVGQISESDVQLAKASNAVLIAFNVRATNQARELAQREGVDIRYYSIIYEVADDIEALVRGKIAPKQREKFLGYAEIRKVFEITKVGKVAGCMVTEGVVKRGCGVRLLRDNVVIHTGELSQLKRFKDDVKEVARNYECGLSFAGYNDIKEGDVVECYETELVPA</sequence>
<comment type="function">
    <text evidence="2">One of the essential components for the initiation of protein synthesis. Protects formylmethionyl-tRNA from spontaneous hydrolysis and promotes its binding to the 30S ribosomal subunits. Also involved in the hydrolysis of GTP during the formation of the 70S ribosomal complex.</text>
</comment>
<comment type="subcellular location">
    <subcellularLocation>
        <location evidence="2">Cytoplasm</location>
    </subcellularLocation>
</comment>
<comment type="similarity">
    <text evidence="2">Belongs to the TRAFAC class translation factor GTPase superfamily. Classic translation factor GTPase family. IF-2 subfamily.</text>
</comment>
<organism>
    <name type="scientific">Granulibacter bethesdensis (strain ATCC BAA-1260 / CGDNIH1)</name>
    <dbReference type="NCBI Taxonomy" id="391165"/>
    <lineage>
        <taxon>Bacteria</taxon>
        <taxon>Pseudomonadati</taxon>
        <taxon>Pseudomonadota</taxon>
        <taxon>Alphaproteobacteria</taxon>
        <taxon>Acetobacterales</taxon>
        <taxon>Acetobacteraceae</taxon>
        <taxon>Granulibacter</taxon>
    </lineage>
</organism>
<proteinExistence type="inferred from homology"/>
<feature type="chain" id="PRO_1000008249" description="Translation initiation factor IF-2">
    <location>
        <begin position="1"/>
        <end position="915"/>
    </location>
</feature>
<feature type="domain" description="tr-type G">
    <location>
        <begin position="414"/>
        <end position="584"/>
    </location>
</feature>
<feature type="region of interest" description="Disordered" evidence="3">
    <location>
        <begin position="1"/>
        <end position="105"/>
    </location>
</feature>
<feature type="region of interest" description="Disordered" evidence="3">
    <location>
        <begin position="121"/>
        <end position="295"/>
    </location>
</feature>
<feature type="region of interest" description="G1" evidence="1">
    <location>
        <begin position="423"/>
        <end position="430"/>
    </location>
</feature>
<feature type="region of interest" description="G2" evidence="1">
    <location>
        <begin position="448"/>
        <end position="452"/>
    </location>
</feature>
<feature type="region of interest" description="G3" evidence="1">
    <location>
        <begin position="470"/>
        <end position="473"/>
    </location>
</feature>
<feature type="region of interest" description="G4" evidence="1">
    <location>
        <begin position="524"/>
        <end position="527"/>
    </location>
</feature>
<feature type="region of interest" description="G5" evidence="1">
    <location>
        <begin position="560"/>
        <end position="562"/>
    </location>
</feature>
<feature type="compositionally biased region" description="Low complexity" evidence="3">
    <location>
        <begin position="57"/>
        <end position="81"/>
    </location>
</feature>
<feature type="compositionally biased region" description="Gly residues" evidence="3">
    <location>
        <begin position="84"/>
        <end position="101"/>
    </location>
</feature>
<feature type="compositionally biased region" description="Basic and acidic residues" evidence="3">
    <location>
        <begin position="121"/>
        <end position="135"/>
    </location>
</feature>
<feature type="compositionally biased region" description="Basic and acidic residues" evidence="3">
    <location>
        <begin position="143"/>
        <end position="180"/>
    </location>
</feature>
<feature type="compositionally biased region" description="Pro residues" evidence="3">
    <location>
        <begin position="186"/>
        <end position="195"/>
    </location>
</feature>
<feature type="compositionally biased region" description="Low complexity" evidence="3">
    <location>
        <begin position="201"/>
        <end position="213"/>
    </location>
</feature>
<feature type="compositionally biased region" description="Low complexity" evidence="3">
    <location>
        <begin position="230"/>
        <end position="239"/>
    </location>
</feature>
<feature type="compositionally biased region" description="Basic and acidic residues" evidence="3">
    <location>
        <begin position="243"/>
        <end position="256"/>
    </location>
</feature>
<feature type="compositionally biased region" description="Low complexity" evidence="3">
    <location>
        <begin position="266"/>
        <end position="278"/>
    </location>
</feature>
<feature type="compositionally biased region" description="Basic and acidic residues" evidence="3">
    <location>
        <begin position="279"/>
        <end position="295"/>
    </location>
</feature>
<feature type="binding site" evidence="2">
    <location>
        <begin position="423"/>
        <end position="430"/>
    </location>
    <ligand>
        <name>GTP</name>
        <dbReference type="ChEBI" id="CHEBI:37565"/>
    </ligand>
</feature>
<feature type="binding site" evidence="2">
    <location>
        <begin position="470"/>
        <end position="474"/>
    </location>
    <ligand>
        <name>GTP</name>
        <dbReference type="ChEBI" id="CHEBI:37565"/>
    </ligand>
</feature>
<feature type="binding site" evidence="2">
    <location>
        <begin position="524"/>
        <end position="527"/>
    </location>
    <ligand>
        <name>GTP</name>
        <dbReference type="ChEBI" id="CHEBI:37565"/>
    </ligand>
</feature>
<accession>Q0BPG2</accession>
<reference key="1">
    <citation type="journal article" date="2007" name="J. Bacteriol.">
        <title>Genome sequence analysis of the emerging human pathogenic acetic acid bacterium Granulibacter bethesdensis.</title>
        <authorList>
            <person name="Greenberg D.E."/>
            <person name="Porcella S.F."/>
            <person name="Zelazny A.M."/>
            <person name="Virtaneva K."/>
            <person name="Sturdevant D.E."/>
            <person name="Kupko J.J. III"/>
            <person name="Barbian K.D."/>
            <person name="Babar A."/>
            <person name="Dorward D.W."/>
            <person name="Holland S.M."/>
        </authorList>
    </citation>
    <scope>NUCLEOTIDE SEQUENCE [LARGE SCALE GENOMIC DNA]</scope>
    <source>
        <strain>ATCC BAA-1260 / CGDNIH1</strain>
    </source>
</reference>
<protein>
    <recommendedName>
        <fullName evidence="2">Translation initiation factor IF-2</fullName>
    </recommendedName>
</protein>
<dbReference type="EMBL" id="CP000394">
    <property type="protein sequence ID" value="ABI63290.1"/>
    <property type="molecule type" value="Genomic_DNA"/>
</dbReference>
<dbReference type="RefSeq" id="WP_011633092.1">
    <property type="nucleotide sequence ID" value="NC_008343.2"/>
</dbReference>
<dbReference type="SMR" id="Q0BPG2"/>
<dbReference type="STRING" id="391165.GbCGDNIH1_2392"/>
<dbReference type="GeneID" id="69746578"/>
<dbReference type="KEGG" id="gbe:GbCGDNIH1_2392"/>
<dbReference type="eggNOG" id="COG0532">
    <property type="taxonomic scope" value="Bacteria"/>
</dbReference>
<dbReference type="HOGENOM" id="CLU_006301_10_1_5"/>
<dbReference type="OrthoDB" id="9811804at2"/>
<dbReference type="Proteomes" id="UP000001963">
    <property type="component" value="Chromosome"/>
</dbReference>
<dbReference type="GO" id="GO:0005829">
    <property type="term" value="C:cytosol"/>
    <property type="evidence" value="ECO:0007669"/>
    <property type="project" value="TreeGrafter"/>
</dbReference>
<dbReference type="GO" id="GO:0005525">
    <property type="term" value="F:GTP binding"/>
    <property type="evidence" value="ECO:0007669"/>
    <property type="project" value="UniProtKB-KW"/>
</dbReference>
<dbReference type="GO" id="GO:0003924">
    <property type="term" value="F:GTPase activity"/>
    <property type="evidence" value="ECO:0007669"/>
    <property type="project" value="UniProtKB-UniRule"/>
</dbReference>
<dbReference type="GO" id="GO:0097216">
    <property type="term" value="F:guanosine tetraphosphate binding"/>
    <property type="evidence" value="ECO:0007669"/>
    <property type="project" value="UniProtKB-ARBA"/>
</dbReference>
<dbReference type="GO" id="GO:0003743">
    <property type="term" value="F:translation initiation factor activity"/>
    <property type="evidence" value="ECO:0007669"/>
    <property type="project" value="UniProtKB-UniRule"/>
</dbReference>
<dbReference type="CDD" id="cd01887">
    <property type="entry name" value="IF2_eIF5B"/>
    <property type="match status" value="1"/>
</dbReference>
<dbReference type="CDD" id="cd03702">
    <property type="entry name" value="IF2_mtIF2_II"/>
    <property type="match status" value="1"/>
</dbReference>
<dbReference type="CDD" id="cd03692">
    <property type="entry name" value="mtIF2_IVc"/>
    <property type="match status" value="1"/>
</dbReference>
<dbReference type="FunFam" id="2.40.30.10:FF:000007">
    <property type="entry name" value="Translation initiation factor IF-2"/>
    <property type="match status" value="1"/>
</dbReference>
<dbReference type="FunFam" id="2.40.30.10:FF:000008">
    <property type="entry name" value="Translation initiation factor IF-2"/>
    <property type="match status" value="1"/>
</dbReference>
<dbReference type="FunFam" id="3.40.50.10050:FF:000001">
    <property type="entry name" value="Translation initiation factor IF-2"/>
    <property type="match status" value="1"/>
</dbReference>
<dbReference type="FunFam" id="3.40.50.300:FF:000019">
    <property type="entry name" value="Translation initiation factor IF-2"/>
    <property type="match status" value="1"/>
</dbReference>
<dbReference type="Gene3D" id="3.40.50.300">
    <property type="entry name" value="P-loop containing nucleotide triphosphate hydrolases"/>
    <property type="match status" value="1"/>
</dbReference>
<dbReference type="Gene3D" id="2.40.30.10">
    <property type="entry name" value="Translation factors"/>
    <property type="match status" value="2"/>
</dbReference>
<dbReference type="Gene3D" id="3.40.50.10050">
    <property type="entry name" value="Translation initiation factor IF- 2, domain 3"/>
    <property type="match status" value="1"/>
</dbReference>
<dbReference type="HAMAP" id="MF_00100_B">
    <property type="entry name" value="IF_2_B"/>
    <property type="match status" value="1"/>
</dbReference>
<dbReference type="InterPro" id="IPR053905">
    <property type="entry name" value="EF-G-like_DII"/>
</dbReference>
<dbReference type="InterPro" id="IPR004161">
    <property type="entry name" value="EFTu-like_2"/>
</dbReference>
<dbReference type="InterPro" id="IPR013575">
    <property type="entry name" value="IF2_assoc_dom_bac"/>
</dbReference>
<dbReference type="InterPro" id="IPR044145">
    <property type="entry name" value="IF2_II"/>
</dbReference>
<dbReference type="InterPro" id="IPR006847">
    <property type="entry name" value="IF2_N"/>
</dbReference>
<dbReference type="InterPro" id="IPR027417">
    <property type="entry name" value="P-loop_NTPase"/>
</dbReference>
<dbReference type="InterPro" id="IPR005225">
    <property type="entry name" value="Small_GTP-bd"/>
</dbReference>
<dbReference type="InterPro" id="IPR000795">
    <property type="entry name" value="T_Tr_GTP-bd_dom"/>
</dbReference>
<dbReference type="InterPro" id="IPR000178">
    <property type="entry name" value="TF_IF2_bacterial-like"/>
</dbReference>
<dbReference type="InterPro" id="IPR015760">
    <property type="entry name" value="TIF_IF2"/>
</dbReference>
<dbReference type="InterPro" id="IPR023115">
    <property type="entry name" value="TIF_IF2_dom3"/>
</dbReference>
<dbReference type="InterPro" id="IPR036925">
    <property type="entry name" value="TIF_IF2_dom3_sf"/>
</dbReference>
<dbReference type="InterPro" id="IPR009000">
    <property type="entry name" value="Transl_B-barrel_sf"/>
</dbReference>
<dbReference type="NCBIfam" id="TIGR00487">
    <property type="entry name" value="IF-2"/>
    <property type="match status" value="1"/>
</dbReference>
<dbReference type="NCBIfam" id="TIGR00231">
    <property type="entry name" value="small_GTP"/>
    <property type="match status" value="1"/>
</dbReference>
<dbReference type="PANTHER" id="PTHR43381:SF5">
    <property type="entry name" value="TR-TYPE G DOMAIN-CONTAINING PROTEIN"/>
    <property type="match status" value="1"/>
</dbReference>
<dbReference type="PANTHER" id="PTHR43381">
    <property type="entry name" value="TRANSLATION INITIATION FACTOR IF-2-RELATED"/>
    <property type="match status" value="1"/>
</dbReference>
<dbReference type="Pfam" id="PF22042">
    <property type="entry name" value="EF-G_D2"/>
    <property type="match status" value="1"/>
</dbReference>
<dbReference type="Pfam" id="PF00009">
    <property type="entry name" value="GTP_EFTU"/>
    <property type="match status" value="1"/>
</dbReference>
<dbReference type="Pfam" id="PF03144">
    <property type="entry name" value="GTP_EFTU_D2"/>
    <property type="match status" value="1"/>
</dbReference>
<dbReference type="Pfam" id="PF11987">
    <property type="entry name" value="IF-2"/>
    <property type="match status" value="1"/>
</dbReference>
<dbReference type="Pfam" id="PF08364">
    <property type="entry name" value="IF2_assoc"/>
    <property type="match status" value="1"/>
</dbReference>
<dbReference type="Pfam" id="PF04760">
    <property type="entry name" value="IF2_N"/>
    <property type="match status" value="1"/>
</dbReference>
<dbReference type="SUPFAM" id="SSF52156">
    <property type="entry name" value="Initiation factor IF2/eIF5b, domain 3"/>
    <property type="match status" value="1"/>
</dbReference>
<dbReference type="SUPFAM" id="SSF52540">
    <property type="entry name" value="P-loop containing nucleoside triphosphate hydrolases"/>
    <property type="match status" value="1"/>
</dbReference>
<dbReference type="SUPFAM" id="SSF50447">
    <property type="entry name" value="Translation proteins"/>
    <property type="match status" value="2"/>
</dbReference>
<dbReference type="PROSITE" id="PS51722">
    <property type="entry name" value="G_TR_2"/>
    <property type="match status" value="1"/>
</dbReference>
<dbReference type="PROSITE" id="PS01176">
    <property type="entry name" value="IF2"/>
    <property type="match status" value="1"/>
</dbReference>
<keyword id="KW-0963">Cytoplasm</keyword>
<keyword id="KW-0342">GTP-binding</keyword>
<keyword id="KW-0396">Initiation factor</keyword>
<keyword id="KW-0547">Nucleotide-binding</keyword>
<keyword id="KW-0648">Protein biosynthesis</keyword>
<keyword id="KW-1185">Reference proteome</keyword>
<evidence type="ECO:0000250" key="1"/>
<evidence type="ECO:0000255" key="2">
    <source>
        <dbReference type="HAMAP-Rule" id="MF_00100"/>
    </source>
</evidence>
<evidence type="ECO:0000256" key="3">
    <source>
        <dbReference type="SAM" id="MobiDB-lite"/>
    </source>
</evidence>
<gene>
    <name evidence="2" type="primary">infB</name>
    <name type="ordered locus">GbCGDNIH1_2392</name>
</gene>
<name>IF2_GRABC</name>